<feature type="chain" id="PRO_1000055226" description="Large ribosomal subunit protein uL6">
    <location>
        <begin position="1"/>
        <end position="177"/>
    </location>
</feature>
<accession>A5EXA3</accession>
<sequence length="177" mass="19464">MSRIGKQPVSIPSGVECSIKGQLLSVKGKKGQMTLDLHPFTKITSEDGFLKLNPVVEDRDHWAICGTMRALVHNMVVGVTQGFEKKLLLMGVGYRAQAQGQKLTLVLGFSHPVEYAVPQGITIETPTPTEIIVKGFDKQLVGEVAAKIRAYRPPEPYKGKGVRYAGEYVMIKEAKKK</sequence>
<comment type="function">
    <text evidence="1">This protein binds to the 23S rRNA, and is important in its secondary structure. It is located near the subunit interface in the base of the L7/L12 stalk, and near the tRNA binding site of the peptidyltransferase center.</text>
</comment>
<comment type="subunit">
    <text evidence="1">Part of the 50S ribosomal subunit.</text>
</comment>
<comment type="similarity">
    <text evidence="1">Belongs to the universal ribosomal protein uL6 family.</text>
</comment>
<reference key="1">
    <citation type="journal article" date="2007" name="Nat. Biotechnol.">
        <title>Genome sequence and identification of candidate vaccine antigens from the animal pathogen Dichelobacter nodosus.</title>
        <authorList>
            <person name="Myers G.S.A."/>
            <person name="Parker D."/>
            <person name="Al-Hasani K."/>
            <person name="Kennan R.M."/>
            <person name="Seemann T."/>
            <person name="Ren Q."/>
            <person name="Badger J.H."/>
            <person name="Selengut J.D."/>
            <person name="Deboy R.T."/>
            <person name="Tettelin H."/>
            <person name="Boyce J.D."/>
            <person name="McCarl V.P."/>
            <person name="Han X."/>
            <person name="Nelson W.C."/>
            <person name="Madupu R."/>
            <person name="Mohamoud Y."/>
            <person name="Holley T."/>
            <person name="Fedorova N."/>
            <person name="Khouri H."/>
            <person name="Bottomley S.P."/>
            <person name="Whittington R.J."/>
            <person name="Adler B."/>
            <person name="Songer J.G."/>
            <person name="Rood J.I."/>
            <person name="Paulsen I.T."/>
        </authorList>
    </citation>
    <scope>NUCLEOTIDE SEQUENCE [LARGE SCALE GENOMIC DNA]</scope>
    <source>
        <strain>VCS1703A</strain>
    </source>
</reference>
<organism>
    <name type="scientific">Dichelobacter nodosus (strain VCS1703A)</name>
    <dbReference type="NCBI Taxonomy" id="246195"/>
    <lineage>
        <taxon>Bacteria</taxon>
        <taxon>Pseudomonadati</taxon>
        <taxon>Pseudomonadota</taxon>
        <taxon>Gammaproteobacteria</taxon>
        <taxon>Cardiobacteriales</taxon>
        <taxon>Cardiobacteriaceae</taxon>
        <taxon>Dichelobacter</taxon>
    </lineage>
</organism>
<name>RL6_DICNV</name>
<gene>
    <name evidence="1" type="primary">rplF</name>
    <name type="ordered locus">DNO_1260</name>
</gene>
<keyword id="KW-1185">Reference proteome</keyword>
<keyword id="KW-0687">Ribonucleoprotein</keyword>
<keyword id="KW-0689">Ribosomal protein</keyword>
<keyword id="KW-0694">RNA-binding</keyword>
<keyword id="KW-0699">rRNA-binding</keyword>
<evidence type="ECO:0000255" key="1">
    <source>
        <dbReference type="HAMAP-Rule" id="MF_01365"/>
    </source>
</evidence>
<evidence type="ECO:0000305" key="2"/>
<proteinExistence type="inferred from homology"/>
<protein>
    <recommendedName>
        <fullName evidence="1">Large ribosomal subunit protein uL6</fullName>
    </recommendedName>
    <alternativeName>
        <fullName evidence="2">50S ribosomal protein L6</fullName>
    </alternativeName>
</protein>
<dbReference type="EMBL" id="CP000513">
    <property type="protein sequence ID" value="ABQ13250.1"/>
    <property type="molecule type" value="Genomic_DNA"/>
</dbReference>
<dbReference type="RefSeq" id="WP_012031555.1">
    <property type="nucleotide sequence ID" value="NC_009446.1"/>
</dbReference>
<dbReference type="SMR" id="A5EXA3"/>
<dbReference type="STRING" id="246195.DNO_1260"/>
<dbReference type="KEGG" id="dno:DNO_1260"/>
<dbReference type="eggNOG" id="COG0097">
    <property type="taxonomic scope" value="Bacteria"/>
</dbReference>
<dbReference type="HOGENOM" id="CLU_065464_1_2_6"/>
<dbReference type="OrthoDB" id="9805007at2"/>
<dbReference type="Proteomes" id="UP000000248">
    <property type="component" value="Chromosome"/>
</dbReference>
<dbReference type="GO" id="GO:0022625">
    <property type="term" value="C:cytosolic large ribosomal subunit"/>
    <property type="evidence" value="ECO:0007669"/>
    <property type="project" value="TreeGrafter"/>
</dbReference>
<dbReference type="GO" id="GO:0019843">
    <property type="term" value="F:rRNA binding"/>
    <property type="evidence" value="ECO:0007669"/>
    <property type="project" value="UniProtKB-UniRule"/>
</dbReference>
<dbReference type="GO" id="GO:0003735">
    <property type="term" value="F:structural constituent of ribosome"/>
    <property type="evidence" value="ECO:0007669"/>
    <property type="project" value="InterPro"/>
</dbReference>
<dbReference type="GO" id="GO:0002181">
    <property type="term" value="P:cytoplasmic translation"/>
    <property type="evidence" value="ECO:0007669"/>
    <property type="project" value="TreeGrafter"/>
</dbReference>
<dbReference type="FunFam" id="3.90.930.12:FF:000001">
    <property type="entry name" value="50S ribosomal protein L6"/>
    <property type="match status" value="1"/>
</dbReference>
<dbReference type="FunFam" id="3.90.930.12:FF:000002">
    <property type="entry name" value="50S ribosomal protein L6"/>
    <property type="match status" value="1"/>
</dbReference>
<dbReference type="Gene3D" id="3.90.930.12">
    <property type="entry name" value="Ribosomal protein L6, alpha-beta domain"/>
    <property type="match status" value="2"/>
</dbReference>
<dbReference type="HAMAP" id="MF_01365_B">
    <property type="entry name" value="Ribosomal_uL6_B"/>
    <property type="match status" value="1"/>
</dbReference>
<dbReference type="InterPro" id="IPR000702">
    <property type="entry name" value="Ribosomal_uL6-like"/>
</dbReference>
<dbReference type="InterPro" id="IPR036789">
    <property type="entry name" value="Ribosomal_uL6-like_a/b-dom_sf"/>
</dbReference>
<dbReference type="InterPro" id="IPR020040">
    <property type="entry name" value="Ribosomal_uL6_a/b-dom"/>
</dbReference>
<dbReference type="InterPro" id="IPR019906">
    <property type="entry name" value="Ribosomal_uL6_bac-type"/>
</dbReference>
<dbReference type="InterPro" id="IPR002358">
    <property type="entry name" value="Ribosomal_uL6_CS"/>
</dbReference>
<dbReference type="NCBIfam" id="TIGR03654">
    <property type="entry name" value="L6_bact"/>
    <property type="match status" value="1"/>
</dbReference>
<dbReference type="PANTHER" id="PTHR11655">
    <property type="entry name" value="60S/50S RIBOSOMAL PROTEIN L6/L9"/>
    <property type="match status" value="1"/>
</dbReference>
<dbReference type="PANTHER" id="PTHR11655:SF14">
    <property type="entry name" value="LARGE RIBOSOMAL SUBUNIT PROTEIN UL6M"/>
    <property type="match status" value="1"/>
</dbReference>
<dbReference type="Pfam" id="PF00347">
    <property type="entry name" value="Ribosomal_L6"/>
    <property type="match status" value="2"/>
</dbReference>
<dbReference type="PIRSF" id="PIRSF002162">
    <property type="entry name" value="Ribosomal_L6"/>
    <property type="match status" value="1"/>
</dbReference>
<dbReference type="PRINTS" id="PR00059">
    <property type="entry name" value="RIBOSOMALL6"/>
</dbReference>
<dbReference type="SUPFAM" id="SSF56053">
    <property type="entry name" value="Ribosomal protein L6"/>
    <property type="match status" value="2"/>
</dbReference>
<dbReference type="PROSITE" id="PS00525">
    <property type="entry name" value="RIBOSOMAL_L6_1"/>
    <property type="match status" value="1"/>
</dbReference>